<keyword id="KW-0687">Ribonucleoprotein</keyword>
<keyword id="KW-0689">Ribosomal protein</keyword>
<reference key="1">
    <citation type="journal article" date="2003" name="Genome Res.">
        <title>Comparative genome analysis of Vibrio vulnificus, a marine pathogen.</title>
        <authorList>
            <person name="Chen C.-Y."/>
            <person name="Wu K.-M."/>
            <person name="Chang Y.-C."/>
            <person name="Chang C.-H."/>
            <person name="Tsai H.-C."/>
            <person name="Liao T.-L."/>
            <person name="Liu Y.-M."/>
            <person name="Chen H.-J."/>
            <person name="Shen A.B.-T."/>
            <person name="Li J.-C."/>
            <person name="Su T.-L."/>
            <person name="Shao C.-P."/>
            <person name="Lee C.-T."/>
            <person name="Hor L.-I."/>
            <person name="Tsai S.-F."/>
        </authorList>
    </citation>
    <scope>NUCLEOTIDE SEQUENCE [LARGE SCALE GENOMIC DNA]</scope>
    <source>
        <strain>YJ016</strain>
    </source>
</reference>
<gene>
    <name evidence="1" type="primary">rpmG</name>
    <name type="ordered locus">VV0287</name>
</gene>
<dbReference type="EMBL" id="BA000037">
    <property type="protein sequence ID" value="BAC93051.1"/>
    <property type="molecule type" value="Genomic_DNA"/>
</dbReference>
<dbReference type="RefSeq" id="WP_011078893.1">
    <property type="nucleotide sequence ID" value="NC_005139.1"/>
</dbReference>
<dbReference type="SMR" id="Q7MPS5"/>
<dbReference type="STRING" id="672.VV93_v1c02790"/>
<dbReference type="GeneID" id="93895123"/>
<dbReference type="KEGG" id="vvy:VV0287"/>
<dbReference type="eggNOG" id="COG0267">
    <property type="taxonomic scope" value="Bacteria"/>
</dbReference>
<dbReference type="HOGENOM" id="CLU_190949_1_1_6"/>
<dbReference type="Proteomes" id="UP000002675">
    <property type="component" value="Chromosome I"/>
</dbReference>
<dbReference type="GO" id="GO:0022625">
    <property type="term" value="C:cytosolic large ribosomal subunit"/>
    <property type="evidence" value="ECO:0007669"/>
    <property type="project" value="TreeGrafter"/>
</dbReference>
<dbReference type="GO" id="GO:0003735">
    <property type="term" value="F:structural constituent of ribosome"/>
    <property type="evidence" value="ECO:0007669"/>
    <property type="project" value="InterPro"/>
</dbReference>
<dbReference type="GO" id="GO:0006412">
    <property type="term" value="P:translation"/>
    <property type="evidence" value="ECO:0007669"/>
    <property type="project" value="UniProtKB-UniRule"/>
</dbReference>
<dbReference type="FunFam" id="2.20.28.120:FF:000001">
    <property type="entry name" value="50S ribosomal protein L33"/>
    <property type="match status" value="1"/>
</dbReference>
<dbReference type="Gene3D" id="2.20.28.120">
    <property type="entry name" value="Ribosomal protein L33"/>
    <property type="match status" value="1"/>
</dbReference>
<dbReference type="HAMAP" id="MF_00294">
    <property type="entry name" value="Ribosomal_bL33"/>
    <property type="match status" value="1"/>
</dbReference>
<dbReference type="InterPro" id="IPR001705">
    <property type="entry name" value="Ribosomal_bL33"/>
</dbReference>
<dbReference type="InterPro" id="IPR018264">
    <property type="entry name" value="Ribosomal_bL33_CS"/>
</dbReference>
<dbReference type="InterPro" id="IPR038584">
    <property type="entry name" value="Ribosomal_bL33_sf"/>
</dbReference>
<dbReference type="InterPro" id="IPR011332">
    <property type="entry name" value="Ribosomal_zn-bd"/>
</dbReference>
<dbReference type="NCBIfam" id="NF001860">
    <property type="entry name" value="PRK00595.1"/>
    <property type="match status" value="1"/>
</dbReference>
<dbReference type="NCBIfam" id="TIGR01023">
    <property type="entry name" value="rpmG_bact"/>
    <property type="match status" value="1"/>
</dbReference>
<dbReference type="PANTHER" id="PTHR15238">
    <property type="entry name" value="54S RIBOSOMAL PROTEIN L39, MITOCHONDRIAL"/>
    <property type="match status" value="1"/>
</dbReference>
<dbReference type="PANTHER" id="PTHR15238:SF1">
    <property type="entry name" value="LARGE RIBOSOMAL SUBUNIT PROTEIN BL33M"/>
    <property type="match status" value="1"/>
</dbReference>
<dbReference type="Pfam" id="PF00471">
    <property type="entry name" value="Ribosomal_L33"/>
    <property type="match status" value="1"/>
</dbReference>
<dbReference type="SUPFAM" id="SSF57829">
    <property type="entry name" value="Zn-binding ribosomal proteins"/>
    <property type="match status" value="1"/>
</dbReference>
<dbReference type="PROSITE" id="PS00582">
    <property type="entry name" value="RIBOSOMAL_L33"/>
    <property type="match status" value="1"/>
</dbReference>
<sequence>MAKKGIREKIRLVSTANTGHFYTTDKNKRNMPGKFEIKKFDPVVRQHVVYKEAKIK</sequence>
<evidence type="ECO:0000255" key="1">
    <source>
        <dbReference type="HAMAP-Rule" id="MF_00294"/>
    </source>
</evidence>
<evidence type="ECO:0000305" key="2"/>
<organism>
    <name type="scientific">Vibrio vulnificus (strain YJ016)</name>
    <dbReference type="NCBI Taxonomy" id="196600"/>
    <lineage>
        <taxon>Bacteria</taxon>
        <taxon>Pseudomonadati</taxon>
        <taxon>Pseudomonadota</taxon>
        <taxon>Gammaproteobacteria</taxon>
        <taxon>Vibrionales</taxon>
        <taxon>Vibrionaceae</taxon>
        <taxon>Vibrio</taxon>
    </lineage>
</organism>
<accession>Q7MPS5</accession>
<name>RL33_VIBVY</name>
<protein>
    <recommendedName>
        <fullName evidence="1">Large ribosomal subunit protein bL33</fullName>
    </recommendedName>
    <alternativeName>
        <fullName evidence="2">50S ribosomal protein L33</fullName>
    </alternativeName>
</protein>
<feature type="chain" id="PRO_0000170264" description="Large ribosomal subunit protein bL33">
    <location>
        <begin position="1"/>
        <end position="56"/>
    </location>
</feature>
<comment type="similarity">
    <text evidence="1">Belongs to the bacterial ribosomal protein bL33 family.</text>
</comment>
<proteinExistence type="inferred from homology"/>